<proteinExistence type="predicted"/>
<keyword id="KW-0040">ANK repeat</keyword>
<keyword id="KW-0677">Repeat</keyword>
<accession>Q1RHH3</accession>
<feature type="chain" id="PRO_0000280923" description="Putative ankyrin repeat protein RBE_1110">
    <location>
        <begin position="1"/>
        <end position="247"/>
    </location>
</feature>
<feature type="repeat" description="ANK 1">
    <location>
        <begin position="105"/>
        <end position="135"/>
    </location>
</feature>
<feature type="repeat" description="ANK 2">
    <location>
        <begin position="139"/>
        <end position="171"/>
    </location>
</feature>
<gene>
    <name type="ordered locus">RBE_1110</name>
</gene>
<dbReference type="EMBL" id="CP000087">
    <property type="protein sequence ID" value="ABE05191.1"/>
    <property type="molecule type" value="Genomic_DNA"/>
</dbReference>
<dbReference type="KEGG" id="rbe:RBE_1110"/>
<dbReference type="HOGENOM" id="CLU_066222_0_0_5"/>
<dbReference type="Proteomes" id="UP000001951">
    <property type="component" value="Chromosome"/>
</dbReference>
<dbReference type="Gene3D" id="1.25.40.20">
    <property type="entry name" value="Ankyrin repeat-containing domain"/>
    <property type="match status" value="1"/>
</dbReference>
<dbReference type="InterPro" id="IPR002110">
    <property type="entry name" value="Ankyrin_rpt"/>
</dbReference>
<dbReference type="InterPro" id="IPR036770">
    <property type="entry name" value="Ankyrin_rpt-contain_sf"/>
</dbReference>
<dbReference type="Pfam" id="PF12796">
    <property type="entry name" value="Ank_2"/>
    <property type="match status" value="1"/>
</dbReference>
<dbReference type="SUPFAM" id="SSF48403">
    <property type="entry name" value="Ankyrin repeat"/>
    <property type="match status" value="1"/>
</dbReference>
<reference key="1">
    <citation type="journal article" date="2006" name="PLoS Genet.">
        <title>Genome sequence of Rickettsia bellii illuminates the role of amoebae in gene exchanges between intracellular pathogens.</title>
        <authorList>
            <person name="Ogata H."/>
            <person name="La Scola B."/>
            <person name="Audic S."/>
            <person name="Renesto P."/>
            <person name="Blanc G."/>
            <person name="Robert C."/>
            <person name="Fournier P.-E."/>
            <person name="Claverie J.-M."/>
            <person name="Raoult D."/>
        </authorList>
    </citation>
    <scope>NUCLEOTIDE SEQUENCE [LARGE SCALE GENOMIC DNA]</scope>
    <source>
        <strain>RML369-C</strain>
    </source>
</reference>
<protein>
    <recommendedName>
        <fullName>Putative ankyrin repeat protein RBE_1110</fullName>
    </recommendedName>
</protein>
<organism>
    <name type="scientific">Rickettsia bellii (strain RML369-C)</name>
    <dbReference type="NCBI Taxonomy" id="336407"/>
    <lineage>
        <taxon>Bacteria</taxon>
        <taxon>Pseudomonadati</taxon>
        <taxon>Pseudomonadota</taxon>
        <taxon>Alphaproteobacteria</taxon>
        <taxon>Rickettsiales</taxon>
        <taxon>Rickettsiaceae</taxon>
        <taxon>Rickettsieae</taxon>
        <taxon>Rickettsia</taxon>
        <taxon>belli group</taxon>
    </lineage>
</organism>
<sequence length="247" mass="28511">MVKILLENEPYLVARIDNQSLNPYMFGERYGFGIEAQNEQNSKIKKVIEHYEKKVASGKVPIRESKSLFIKDTKETPDSLKFLQYLYDKGNEENLKLYIAVNLKQNKDVFYQAVMSNKKKLVKKILSYNPKCIDYTNSEGHNVLHIALKNKAKADAEMIEILLQCKPKLITEKNKENLTPLMFGEKYGFSEVLSKKEIDKIKAILKDYERDAIRYDSYLPDPPNEKMVDFEDELLGNNLGGVNGTEL</sequence>
<name>Y1110_RICBR</name>